<protein>
    <recommendedName>
        <fullName evidence="1">Potassium-transporting ATPase KdpC subunit</fullName>
    </recommendedName>
    <alternativeName>
        <fullName evidence="1">ATP phosphohydrolase [potassium-transporting] C chain</fullName>
    </alternativeName>
    <alternativeName>
        <fullName evidence="1">Potassium-binding and translocating subunit C</fullName>
    </alternativeName>
    <alternativeName>
        <fullName evidence="1">Potassium-translocating ATPase C chain</fullName>
    </alternativeName>
</protein>
<dbReference type="EMBL" id="CP001001">
    <property type="protein sequence ID" value="ACB22232.1"/>
    <property type="molecule type" value="Genomic_DNA"/>
</dbReference>
<dbReference type="RefSeq" id="WP_012317230.1">
    <property type="nucleotide sequence ID" value="NC_010505.1"/>
</dbReference>
<dbReference type="SMR" id="B1M7D4"/>
<dbReference type="STRING" id="426355.Mrad2831_0206"/>
<dbReference type="GeneID" id="6136048"/>
<dbReference type="KEGG" id="mrd:Mrad2831_0206"/>
<dbReference type="PATRIC" id="fig|426355.14.peg.233"/>
<dbReference type="eggNOG" id="COG2156">
    <property type="taxonomic scope" value="Bacteria"/>
</dbReference>
<dbReference type="HOGENOM" id="CLU_077094_2_0_5"/>
<dbReference type="OrthoDB" id="9788285at2"/>
<dbReference type="Proteomes" id="UP000006589">
    <property type="component" value="Chromosome"/>
</dbReference>
<dbReference type="GO" id="GO:0005886">
    <property type="term" value="C:plasma membrane"/>
    <property type="evidence" value="ECO:0007669"/>
    <property type="project" value="UniProtKB-SubCell"/>
</dbReference>
<dbReference type="GO" id="GO:0005524">
    <property type="term" value="F:ATP binding"/>
    <property type="evidence" value="ECO:0007669"/>
    <property type="project" value="UniProtKB-UniRule"/>
</dbReference>
<dbReference type="GO" id="GO:0008556">
    <property type="term" value="F:P-type potassium transmembrane transporter activity"/>
    <property type="evidence" value="ECO:0007669"/>
    <property type="project" value="InterPro"/>
</dbReference>
<dbReference type="HAMAP" id="MF_00276">
    <property type="entry name" value="KdpC"/>
    <property type="match status" value="1"/>
</dbReference>
<dbReference type="InterPro" id="IPR003820">
    <property type="entry name" value="KdpC"/>
</dbReference>
<dbReference type="NCBIfam" id="TIGR00681">
    <property type="entry name" value="kdpC"/>
    <property type="match status" value="1"/>
</dbReference>
<dbReference type="NCBIfam" id="NF001454">
    <property type="entry name" value="PRK00315.1"/>
    <property type="match status" value="1"/>
</dbReference>
<dbReference type="NCBIfam" id="NF010603">
    <property type="entry name" value="PRK13999.1"/>
    <property type="match status" value="1"/>
</dbReference>
<dbReference type="PANTHER" id="PTHR30042">
    <property type="entry name" value="POTASSIUM-TRANSPORTING ATPASE C CHAIN"/>
    <property type="match status" value="1"/>
</dbReference>
<dbReference type="PANTHER" id="PTHR30042:SF2">
    <property type="entry name" value="POTASSIUM-TRANSPORTING ATPASE KDPC SUBUNIT"/>
    <property type="match status" value="1"/>
</dbReference>
<dbReference type="Pfam" id="PF02669">
    <property type="entry name" value="KdpC"/>
    <property type="match status" value="1"/>
</dbReference>
<dbReference type="PIRSF" id="PIRSF001296">
    <property type="entry name" value="K_ATPase_KdpC"/>
    <property type="match status" value="1"/>
</dbReference>
<accession>B1M7D4</accession>
<comment type="function">
    <text evidence="1">Part of the high-affinity ATP-driven potassium transport (or Kdp) system, which catalyzes the hydrolysis of ATP coupled with the electrogenic transport of potassium into the cytoplasm. This subunit acts as a catalytic chaperone that increases the ATP-binding affinity of the ATP-hydrolyzing subunit KdpB by the formation of a transient KdpB/KdpC/ATP ternary complex.</text>
</comment>
<comment type="subunit">
    <text evidence="1">The system is composed of three essential subunits: KdpA, KdpB and KdpC.</text>
</comment>
<comment type="subcellular location">
    <subcellularLocation>
        <location evidence="1">Cell inner membrane</location>
        <topology evidence="1">Single-pass membrane protein</topology>
    </subcellularLocation>
</comment>
<comment type="similarity">
    <text evidence="1">Belongs to the KdpC family.</text>
</comment>
<evidence type="ECO:0000255" key="1">
    <source>
        <dbReference type="HAMAP-Rule" id="MF_00276"/>
    </source>
</evidence>
<proteinExistence type="inferred from homology"/>
<feature type="chain" id="PRO_1000114731" description="Potassium-transporting ATPase KdpC subunit">
    <location>
        <begin position="1"/>
        <end position="201"/>
    </location>
</feature>
<feature type="transmembrane region" description="Helical" evidence="1">
    <location>
        <begin position="7"/>
        <end position="29"/>
    </location>
</feature>
<gene>
    <name evidence="1" type="primary">kdpC</name>
    <name type="ordered locus">Mrad2831_0206</name>
</gene>
<reference key="1">
    <citation type="submission" date="2008-03" db="EMBL/GenBank/DDBJ databases">
        <title>Complete sequence of chromosome of Methylobacterium radiotolerans JCM 2831.</title>
        <authorList>
            <consortium name="US DOE Joint Genome Institute"/>
            <person name="Copeland A."/>
            <person name="Lucas S."/>
            <person name="Lapidus A."/>
            <person name="Glavina del Rio T."/>
            <person name="Dalin E."/>
            <person name="Tice H."/>
            <person name="Bruce D."/>
            <person name="Goodwin L."/>
            <person name="Pitluck S."/>
            <person name="Kiss H."/>
            <person name="Brettin T."/>
            <person name="Detter J.C."/>
            <person name="Han C."/>
            <person name="Kuske C.R."/>
            <person name="Schmutz J."/>
            <person name="Larimer F."/>
            <person name="Land M."/>
            <person name="Hauser L."/>
            <person name="Kyrpides N."/>
            <person name="Mikhailova N."/>
            <person name="Marx C.J."/>
            <person name="Richardson P."/>
        </authorList>
    </citation>
    <scope>NUCLEOTIDE SEQUENCE [LARGE SCALE GENOMIC DNA]</scope>
    <source>
        <strain>ATCC 27329 / DSM 1819 / JCM 2831 / NBRC 15690 / NCIMB 10815 / 0-1</strain>
    </source>
</reference>
<keyword id="KW-0067">ATP-binding</keyword>
<keyword id="KW-0997">Cell inner membrane</keyword>
<keyword id="KW-1003">Cell membrane</keyword>
<keyword id="KW-0406">Ion transport</keyword>
<keyword id="KW-0472">Membrane</keyword>
<keyword id="KW-0547">Nucleotide-binding</keyword>
<keyword id="KW-0630">Potassium</keyword>
<keyword id="KW-0633">Potassium transport</keyword>
<keyword id="KW-0812">Transmembrane</keyword>
<keyword id="KW-1133">Transmembrane helix</keyword>
<keyword id="KW-0813">Transport</keyword>
<sequence>MLKQLRPALVLLTALTAITGLAYPLAMTGLAGAIFPAKAAGSLIERDGTVIGSSLIGQNFTGAGYFHGRPSATTAPDPADASKTVPAPYNAANSSGSNLGPTSAALAERVKADVEALKSENPGAPVPVDLVTTSGSGLDPDISPEAAYFQVPRVAKARNIPQDKLRDLVTARIEGRTLGVLGEPRVNVLALNLAVDDLARR</sequence>
<name>KDPC_METRJ</name>
<organism>
    <name type="scientific">Methylobacterium radiotolerans (strain ATCC 27329 / DSM 1819 / JCM 2831 / NBRC 15690 / NCIMB 10815 / 0-1)</name>
    <dbReference type="NCBI Taxonomy" id="426355"/>
    <lineage>
        <taxon>Bacteria</taxon>
        <taxon>Pseudomonadati</taxon>
        <taxon>Pseudomonadota</taxon>
        <taxon>Alphaproteobacteria</taxon>
        <taxon>Hyphomicrobiales</taxon>
        <taxon>Methylobacteriaceae</taxon>
        <taxon>Methylobacterium</taxon>
    </lineage>
</organism>